<reference key="1">
    <citation type="submission" date="2007-09" db="EMBL/GenBank/DDBJ databases">
        <title>Complete genome sequence of Rickettsia akari.</title>
        <authorList>
            <person name="Madan A."/>
            <person name="Fahey J."/>
            <person name="Helton E."/>
            <person name="Ketteman M."/>
            <person name="Madan A."/>
            <person name="Rodrigues S."/>
            <person name="Sanchez A."/>
            <person name="Whiting M."/>
            <person name="Dasch G."/>
            <person name="Eremeeva M."/>
        </authorList>
    </citation>
    <scope>NUCLEOTIDE SEQUENCE [LARGE SCALE GENOMIC DNA]</scope>
    <source>
        <strain>Hartford</strain>
    </source>
</reference>
<sequence length="215" mass="23712">MRTGIIAQKIGMTSVFNDKGERIPLTLVKVDDCQVVGHKTLEKHGYNALVIGIKDKKISRVTKPMKQVFANAKISPKTKLKEFRISEGNFIDIAANLEVDHFMAGQFVDITATTIGKGFAGSMKRHNFRGLEASHGVSISHRSHGSTGQRQDPGKVFKGKKMAGHMGCNQVTIQNLKIFAVDRERKLIMIRGSIPGHKNSYLSIKDAVKKNSITV</sequence>
<name>RL3_RICAH</name>
<gene>
    <name evidence="1" type="primary">rplC</name>
    <name type="ordered locus">A1C_05105</name>
</gene>
<feature type="chain" id="PRO_1000052125" description="Large ribosomal subunit protein uL3">
    <location>
        <begin position="1"/>
        <end position="215"/>
    </location>
</feature>
<feature type="region of interest" description="Disordered" evidence="2">
    <location>
        <begin position="136"/>
        <end position="161"/>
    </location>
</feature>
<feature type="modified residue" description="N5-methylglutamine" evidence="1">
    <location>
        <position position="151"/>
    </location>
</feature>
<keyword id="KW-0488">Methylation</keyword>
<keyword id="KW-0687">Ribonucleoprotein</keyword>
<keyword id="KW-0689">Ribosomal protein</keyword>
<keyword id="KW-0694">RNA-binding</keyword>
<keyword id="KW-0699">rRNA-binding</keyword>
<evidence type="ECO:0000255" key="1">
    <source>
        <dbReference type="HAMAP-Rule" id="MF_01325"/>
    </source>
</evidence>
<evidence type="ECO:0000256" key="2">
    <source>
        <dbReference type="SAM" id="MobiDB-lite"/>
    </source>
</evidence>
<evidence type="ECO:0000305" key="3"/>
<comment type="function">
    <text evidence="1">One of the primary rRNA binding proteins, it binds directly near the 3'-end of the 23S rRNA, where it nucleates assembly of the 50S subunit.</text>
</comment>
<comment type="subunit">
    <text evidence="1">Part of the 50S ribosomal subunit. Forms a cluster with proteins L14 and L19.</text>
</comment>
<comment type="PTM">
    <text evidence="1">Methylated by PrmB.</text>
</comment>
<comment type="similarity">
    <text evidence="1">Belongs to the universal ribosomal protein uL3 family.</text>
</comment>
<dbReference type="EMBL" id="CP000847">
    <property type="protein sequence ID" value="ABV75275.1"/>
    <property type="molecule type" value="Genomic_DNA"/>
</dbReference>
<dbReference type="RefSeq" id="WP_012149905.1">
    <property type="nucleotide sequence ID" value="NC_009881.1"/>
</dbReference>
<dbReference type="SMR" id="A8GPF0"/>
<dbReference type="STRING" id="293614.A1C_05105"/>
<dbReference type="KEGG" id="rak:A1C_05105"/>
<dbReference type="eggNOG" id="COG0087">
    <property type="taxonomic scope" value="Bacteria"/>
</dbReference>
<dbReference type="HOGENOM" id="CLU_044142_2_0_5"/>
<dbReference type="Proteomes" id="UP000006830">
    <property type="component" value="Chromosome"/>
</dbReference>
<dbReference type="GO" id="GO:1990904">
    <property type="term" value="C:ribonucleoprotein complex"/>
    <property type="evidence" value="ECO:0007669"/>
    <property type="project" value="UniProtKB-KW"/>
</dbReference>
<dbReference type="GO" id="GO:0005840">
    <property type="term" value="C:ribosome"/>
    <property type="evidence" value="ECO:0007669"/>
    <property type="project" value="UniProtKB-KW"/>
</dbReference>
<dbReference type="GO" id="GO:0019843">
    <property type="term" value="F:rRNA binding"/>
    <property type="evidence" value="ECO:0007669"/>
    <property type="project" value="UniProtKB-UniRule"/>
</dbReference>
<dbReference type="GO" id="GO:0003735">
    <property type="term" value="F:structural constituent of ribosome"/>
    <property type="evidence" value="ECO:0007669"/>
    <property type="project" value="InterPro"/>
</dbReference>
<dbReference type="GO" id="GO:0006412">
    <property type="term" value="P:translation"/>
    <property type="evidence" value="ECO:0007669"/>
    <property type="project" value="UniProtKB-UniRule"/>
</dbReference>
<dbReference type="FunFam" id="2.40.30.10:FF:000004">
    <property type="entry name" value="50S ribosomal protein L3"/>
    <property type="match status" value="1"/>
</dbReference>
<dbReference type="Gene3D" id="3.30.160.810">
    <property type="match status" value="1"/>
</dbReference>
<dbReference type="Gene3D" id="2.40.30.10">
    <property type="entry name" value="Translation factors"/>
    <property type="match status" value="1"/>
</dbReference>
<dbReference type="HAMAP" id="MF_01325_B">
    <property type="entry name" value="Ribosomal_uL3_B"/>
    <property type="match status" value="1"/>
</dbReference>
<dbReference type="InterPro" id="IPR000597">
    <property type="entry name" value="Ribosomal_uL3"/>
</dbReference>
<dbReference type="InterPro" id="IPR019927">
    <property type="entry name" value="Ribosomal_uL3_bac/org-type"/>
</dbReference>
<dbReference type="InterPro" id="IPR019926">
    <property type="entry name" value="Ribosomal_uL3_CS"/>
</dbReference>
<dbReference type="InterPro" id="IPR009000">
    <property type="entry name" value="Transl_B-barrel_sf"/>
</dbReference>
<dbReference type="NCBIfam" id="TIGR03625">
    <property type="entry name" value="L3_bact"/>
    <property type="match status" value="1"/>
</dbReference>
<dbReference type="PANTHER" id="PTHR11229">
    <property type="entry name" value="50S RIBOSOMAL PROTEIN L3"/>
    <property type="match status" value="1"/>
</dbReference>
<dbReference type="PANTHER" id="PTHR11229:SF16">
    <property type="entry name" value="LARGE RIBOSOMAL SUBUNIT PROTEIN UL3C"/>
    <property type="match status" value="1"/>
</dbReference>
<dbReference type="Pfam" id="PF00297">
    <property type="entry name" value="Ribosomal_L3"/>
    <property type="match status" value="1"/>
</dbReference>
<dbReference type="SUPFAM" id="SSF50447">
    <property type="entry name" value="Translation proteins"/>
    <property type="match status" value="1"/>
</dbReference>
<dbReference type="PROSITE" id="PS00474">
    <property type="entry name" value="RIBOSOMAL_L3"/>
    <property type="match status" value="1"/>
</dbReference>
<protein>
    <recommendedName>
        <fullName evidence="1">Large ribosomal subunit protein uL3</fullName>
    </recommendedName>
    <alternativeName>
        <fullName evidence="3">50S ribosomal protein L3</fullName>
    </alternativeName>
</protein>
<accession>A8GPF0</accession>
<organism>
    <name type="scientific">Rickettsia akari (strain Hartford)</name>
    <dbReference type="NCBI Taxonomy" id="293614"/>
    <lineage>
        <taxon>Bacteria</taxon>
        <taxon>Pseudomonadati</taxon>
        <taxon>Pseudomonadota</taxon>
        <taxon>Alphaproteobacteria</taxon>
        <taxon>Rickettsiales</taxon>
        <taxon>Rickettsiaceae</taxon>
        <taxon>Rickettsieae</taxon>
        <taxon>Rickettsia</taxon>
        <taxon>spotted fever group</taxon>
    </lineage>
</organism>
<proteinExistence type="inferred from homology"/>